<dbReference type="EMBL" id="CP000270">
    <property type="protein sequence ID" value="ABE32433.1"/>
    <property type="molecule type" value="Genomic_DNA"/>
</dbReference>
<dbReference type="RefSeq" id="WP_007180322.1">
    <property type="nucleotide sequence ID" value="NZ_CP008760.1"/>
</dbReference>
<dbReference type="SMR" id="Q13U06"/>
<dbReference type="STRING" id="266265.Bxe_A0500"/>
<dbReference type="KEGG" id="bxb:DR64_2676"/>
<dbReference type="KEGG" id="bxe:Bxe_A0500"/>
<dbReference type="eggNOG" id="COG4582">
    <property type="taxonomic scope" value="Bacteria"/>
</dbReference>
<dbReference type="OrthoDB" id="5294622at2"/>
<dbReference type="Proteomes" id="UP000001817">
    <property type="component" value="Chromosome 1"/>
</dbReference>
<dbReference type="GO" id="GO:0032153">
    <property type="term" value="C:cell division site"/>
    <property type="evidence" value="ECO:0007669"/>
    <property type="project" value="TreeGrafter"/>
</dbReference>
<dbReference type="GO" id="GO:0005737">
    <property type="term" value="C:cytoplasm"/>
    <property type="evidence" value="ECO:0007669"/>
    <property type="project" value="UniProtKB-SubCell"/>
</dbReference>
<dbReference type="GO" id="GO:0000917">
    <property type="term" value="P:division septum assembly"/>
    <property type="evidence" value="ECO:0007669"/>
    <property type="project" value="UniProtKB-KW"/>
</dbReference>
<dbReference type="GO" id="GO:0043093">
    <property type="term" value="P:FtsZ-dependent cytokinesis"/>
    <property type="evidence" value="ECO:0007669"/>
    <property type="project" value="UniProtKB-UniRule"/>
</dbReference>
<dbReference type="Gene3D" id="1.10.3900.10">
    <property type="entry name" value="YacF-like"/>
    <property type="match status" value="1"/>
</dbReference>
<dbReference type="Gene3D" id="2.60.440.10">
    <property type="entry name" value="YacF-like domains"/>
    <property type="match status" value="1"/>
</dbReference>
<dbReference type="HAMAP" id="MF_01092">
    <property type="entry name" value="ZapD"/>
    <property type="match status" value="1"/>
</dbReference>
<dbReference type="InterPro" id="IPR009777">
    <property type="entry name" value="ZapD"/>
</dbReference>
<dbReference type="InterPro" id="IPR027462">
    <property type="entry name" value="ZapD_C"/>
</dbReference>
<dbReference type="InterPro" id="IPR036268">
    <property type="entry name" value="ZapD_sf"/>
</dbReference>
<dbReference type="NCBIfam" id="NF003656">
    <property type="entry name" value="PRK05287.1-4"/>
    <property type="match status" value="1"/>
</dbReference>
<dbReference type="PANTHER" id="PTHR39455">
    <property type="entry name" value="CELL DIVISION PROTEIN ZAPD"/>
    <property type="match status" value="1"/>
</dbReference>
<dbReference type="PANTHER" id="PTHR39455:SF1">
    <property type="entry name" value="CELL DIVISION PROTEIN ZAPD"/>
    <property type="match status" value="1"/>
</dbReference>
<dbReference type="Pfam" id="PF07072">
    <property type="entry name" value="ZapD"/>
    <property type="match status" value="1"/>
</dbReference>
<dbReference type="SUPFAM" id="SSF160950">
    <property type="entry name" value="YacF-like"/>
    <property type="match status" value="1"/>
</dbReference>
<protein>
    <recommendedName>
        <fullName evidence="1">Cell division protein ZapD</fullName>
    </recommendedName>
    <alternativeName>
        <fullName evidence="1">Z ring-associated protein D</fullName>
    </alternativeName>
</protein>
<comment type="function">
    <text evidence="1">Cell division factor that enhances FtsZ-ring assembly. Directly interacts with FtsZ and promotes bundling of FtsZ protofilaments, with a reduction in FtsZ GTPase activity.</text>
</comment>
<comment type="subunit">
    <text evidence="1">Interacts with FtsZ.</text>
</comment>
<comment type="subcellular location">
    <subcellularLocation>
        <location evidence="1">Cytoplasm</location>
    </subcellularLocation>
    <text evidence="1">Localizes to mid-cell in an FtsZ-dependent manner.</text>
</comment>
<comment type="similarity">
    <text evidence="1">Belongs to the ZapD family.</text>
</comment>
<reference key="1">
    <citation type="journal article" date="2006" name="Proc. Natl. Acad. Sci. U.S.A.">
        <title>Burkholderia xenovorans LB400 harbors a multi-replicon, 9.73-Mbp genome shaped for versatility.</title>
        <authorList>
            <person name="Chain P.S.G."/>
            <person name="Denef V.J."/>
            <person name="Konstantinidis K.T."/>
            <person name="Vergez L.M."/>
            <person name="Agullo L."/>
            <person name="Reyes V.L."/>
            <person name="Hauser L."/>
            <person name="Cordova M."/>
            <person name="Gomez L."/>
            <person name="Gonzalez M."/>
            <person name="Land M."/>
            <person name="Lao V."/>
            <person name="Larimer F."/>
            <person name="LiPuma J.J."/>
            <person name="Mahenthiralingam E."/>
            <person name="Malfatti S.A."/>
            <person name="Marx C.J."/>
            <person name="Parnell J.J."/>
            <person name="Ramette A."/>
            <person name="Richardson P."/>
            <person name="Seeger M."/>
            <person name="Smith D."/>
            <person name="Spilker T."/>
            <person name="Sul W.J."/>
            <person name="Tsoi T.V."/>
            <person name="Ulrich L.E."/>
            <person name="Zhulin I.B."/>
            <person name="Tiedje J.M."/>
        </authorList>
    </citation>
    <scope>NUCLEOTIDE SEQUENCE [LARGE SCALE GENOMIC DNA]</scope>
    <source>
        <strain>LB400</strain>
    </source>
</reference>
<evidence type="ECO:0000255" key="1">
    <source>
        <dbReference type="HAMAP-Rule" id="MF_01092"/>
    </source>
</evidence>
<proteinExistence type="inferred from homology"/>
<gene>
    <name evidence="1" type="primary">zapD</name>
    <name type="ordered locus">Bxeno_A3895</name>
    <name type="ORF">Bxe_A0500</name>
</gene>
<sequence>MILYEYPFNERIRTLLRLEDLFERFTFFLTQEDAREHHVALTTLFEISEVAGRADLKSDLMKELERQRQTLAPFRGNPGIEQNALEAVLGEIEQTLSGLSQMQGKTGQHLADNEWLASIRSRAIIPGGTCKFDLPSYYAWQQLHPDQRRQDIAKWVTPLLPLRDAATIVLRLARESGQASKVMAMQGSYQQMLSGRSYQLMQVRVAPELRVIPEASANKYMLWVRFTVQDGDLRPRAVDVDVPFQLTLCSL</sequence>
<feature type="chain" id="PRO_1000064903" description="Cell division protein ZapD">
    <location>
        <begin position="1"/>
        <end position="251"/>
    </location>
</feature>
<accession>Q13U06</accession>
<keyword id="KW-0131">Cell cycle</keyword>
<keyword id="KW-0132">Cell division</keyword>
<keyword id="KW-0963">Cytoplasm</keyword>
<keyword id="KW-1185">Reference proteome</keyword>
<keyword id="KW-0717">Septation</keyword>
<name>ZAPD_PARXL</name>
<organism>
    <name type="scientific">Paraburkholderia xenovorans (strain LB400)</name>
    <dbReference type="NCBI Taxonomy" id="266265"/>
    <lineage>
        <taxon>Bacteria</taxon>
        <taxon>Pseudomonadati</taxon>
        <taxon>Pseudomonadota</taxon>
        <taxon>Betaproteobacteria</taxon>
        <taxon>Burkholderiales</taxon>
        <taxon>Burkholderiaceae</taxon>
        <taxon>Paraburkholderia</taxon>
    </lineage>
</organism>